<organism>
    <name type="scientific">Rhizobium johnstonii (strain DSM 114642 / LMG 32736 / 3841)</name>
    <name type="common">Rhizobium leguminosarum bv. viciae</name>
    <dbReference type="NCBI Taxonomy" id="216596"/>
    <lineage>
        <taxon>Bacteria</taxon>
        <taxon>Pseudomonadati</taxon>
        <taxon>Pseudomonadota</taxon>
        <taxon>Alphaproteobacteria</taxon>
        <taxon>Hyphomicrobiales</taxon>
        <taxon>Rhizobiaceae</taxon>
        <taxon>Rhizobium/Agrobacterium group</taxon>
        <taxon>Rhizobium</taxon>
        <taxon>Rhizobium johnstonii</taxon>
    </lineage>
</organism>
<accession>Q1MKU7</accession>
<protein>
    <recommendedName>
        <fullName evidence="1">DNA mismatch repair protein MutL</fullName>
    </recommendedName>
</protein>
<gene>
    <name evidence="1" type="primary">mutL</name>
    <name type="ordered locus">RL0910</name>
</gene>
<evidence type="ECO:0000255" key="1">
    <source>
        <dbReference type="HAMAP-Rule" id="MF_00149"/>
    </source>
</evidence>
<evidence type="ECO:0000256" key="2">
    <source>
        <dbReference type="SAM" id="MobiDB-lite"/>
    </source>
</evidence>
<proteinExistence type="inferred from homology"/>
<name>MUTL_RHIJ3</name>
<keyword id="KW-0227">DNA damage</keyword>
<keyword id="KW-0234">DNA repair</keyword>
<sequence length="600" mass="64390">MAIRQLSETLINQIAAGEVIERPASAAKELIENALDAGATRIEIATSGGGKALLRVSDNGSGMDAADLELAVRRHCTSKISETLEDIRTLGFRGEALPSIGSVARLSIASRRRDSAGGHEIAVAGGKIAHLRPAAANPGTIVEVRDLFFATPARLKFLKTEKAEAGAITEIVKRMAIAFPAVRFVLSGSDRTTLEFPATGDDHLGRMAQVLGKEFRDNAIALDAVREEIALTGFAGVPTFNRGNSAHQYAFVNGRPVQDKLILSAIRGAYAETIPSGRYPVAVLSITLDPALVDVNVHPAKSDVRFRDPGLVRGLIVGAIREALARDGSRAATTGASDMLRSFRPGFPPNSQRPQTAWSAETSSSRPYQPATGFGERPQASFDGLSMPTARAEPQFSPQPAAAEPNARYPLGAARAQIHANYIVAQTEDGLVIVDQHAAHERLVFEAMRKALHSKRLASQVLLIPEIVDIPEEDCDRLMQHAAELSELGLAIERFGPGAIAVRETPAMLGEVDAHGLIRQLADEIAEWDTASGLSAKLEYVAATMACHGSVRSGRRLRPEEMNALLREMEVTPGSGQCNHGRPTYIELKLSDIERLFGRS</sequence>
<reference key="1">
    <citation type="journal article" date="2006" name="Genome Biol.">
        <title>The genome of Rhizobium leguminosarum has recognizable core and accessory components.</title>
        <authorList>
            <person name="Young J.P.W."/>
            <person name="Crossman L.C."/>
            <person name="Johnston A.W.B."/>
            <person name="Thomson N.R."/>
            <person name="Ghazoui Z.F."/>
            <person name="Hull K.H."/>
            <person name="Wexler M."/>
            <person name="Curson A.R.J."/>
            <person name="Todd J.D."/>
            <person name="Poole P.S."/>
            <person name="Mauchline T.H."/>
            <person name="East A.K."/>
            <person name="Quail M.A."/>
            <person name="Churcher C."/>
            <person name="Arrowsmith C."/>
            <person name="Cherevach I."/>
            <person name="Chillingworth T."/>
            <person name="Clarke K."/>
            <person name="Cronin A."/>
            <person name="Davis P."/>
            <person name="Fraser A."/>
            <person name="Hance Z."/>
            <person name="Hauser H."/>
            <person name="Jagels K."/>
            <person name="Moule S."/>
            <person name="Mungall K."/>
            <person name="Norbertczak H."/>
            <person name="Rabbinowitsch E."/>
            <person name="Sanders M."/>
            <person name="Simmonds M."/>
            <person name="Whitehead S."/>
            <person name="Parkhill J."/>
        </authorList>
    </citation>
    <scope>NUCLEOTIDE SEQUENCE [LARGE SCALE GENOMIC DNA]</scope>
    <source>
        <strain>DSM 114642 / LMG 32736 / 3841</strain>
    </source>
</reference>
<feature type="chain" id="PRO_1000010061" description="DNA mismatch repair protein MutL">
    <location>
        <begin position="1"/>
        <end position="600"/>
    </location>
</feature>
<feature type="region of interest" description="Disordered" evidence="2">
    <location>
        <begin position="327"/>
        <end position="405"/>
    </location>
</feature>
<feature type="compositionally biased region" description="Polar residues" evidence="2">
    <location>
        <begin position="349"/>
        <end position="367"/>
    </location>
</feature>
<dbReference type="EMBL" id="AM236080">
    <property type="protein sequence ID" value="CAK06407.1"/>
    <property type="molecule type" value="Genomic_DNA"/>
</dbReference>
<dbReference type="RefSeq" id="WP_011650652.1">
    <property type="nucleotide sequence ID" value="NC_008380.1"/>
</dbReference>
<dbReference type="SMR" id="Q1MKU7"/>
<dbReference type="EnsemblBacteria" id="CAK06407">
    <property type="protein sequence ID" value="CAK06407"/>
    <property type="gene ID" value="RL0910"/>
</dbReference>
<dbReference type="KEGG" id="rle:RL0910"/>
<dbReference type="eggNOG" id="COG0323">
    <property type="taxonomic scope" value="Bacteria"/>
</dbReference>
<dbReference type="HOGENOM" id="CLU_004131_4_2_5"/>
<dbReference type="Proteomes" id="UP000006575">
    <property type="component" value="Chromosome"/>
</dbReference>
<dbReference type="GO" id="GO:0032300">
    <property type="term" value="C:mismatch repair complex"/>
    <property type="evidence" value="ECO:0007669"/>
    <property type="project" value="InterPro"/>
</dbReference>
<dbReference type="GO" id="GO:0005524">
    <property type="term" value="F:ATP binding"/>
    <property type="evidence" value="ECO:0007669"/>
    <property type="project" value="InterPro"/>
</dbReference>
<dbReference type="GO" id="GO:0016887">
    <property type="term" value="F:ATP hydrolysis activity"/>
    <property type="evidence" value="ECO:0007669"/>
    <property type="project" value="InterPro"/>
</dbReference>
<dbReference type="GO" id="GO:0140664">
    <property type="term" value="F:ATP-dependent DNA damage sensor activity"/>
    <property type="evidence" value="ECO:0007669"/>
    <property type="project" value="InterPro"/>
</dbReference>
<dbReference type="GO" id="GO:0030983">
    <property type="term" value="F:mismatched DNA binding"/>
    <property type="evidence" value="ECO:0007669"/>
    <property type="project" value="InterPro"/>
</dbReference>
<dbReference type="GO" id="GO:0006298">
    <property type="term" value="P:mismatch repair"/>
    <property type="evidence" value="ECO:0007669"/>
    <property type="project" value="UniProtKB-UniRule"/>
</dbReference>
<dbReference type="CDD" id="cd16926">
    <property type="entry name" value="HATPase_MutL-MLH-PMS-like"/>
    <property type="match status" value="1"/>
</dbReference>
<dbReference type="CDD" id="cd00782">
    <property type="entry name" value="MutL_Trans"/>
    <property type="match status" value="1"/>
</dbReference>
<dbReference type="FunFam" id="3.30.565.10:FF:000003">
    <property type="entry name" value="DNA mismatch repair endonuclease MutL"/>
    <property type="match status" value="1"/>
</dbReference>
<dbReference type="Gene3D" id="3.30.230.10">
    <property type="match status" value="1"/>
</dbReference>
<dbReference type="Gene3D" id="3.30.565.10">
    <property type="entry name" value="Histidine kinase-like ATPase, C-terminal domain"/>
    <property type="match status" value="1"/>
</dbReference>
<dbReference type="Gene3D" id="3.30.1540.20">
    <property type="entry name" value="MutL, C-terminal domain, dimerisation subdomain"/>
    <property type="match status" value="1"/>
</dbReference>
<dbReference type="Gene3D" id="3.30.1370.100">
    <property type="entry name" value="MutL, C-terminal domain, regulatory subdomain"/>
    <property type="match status" value="1"/>
</dbReference>
<dbReference type="HAMAP" id="MF_00149">
    <property type="entry name" value="DNA_mis_repair"/>
    <property type="match status" value="1"/>
</dbReference>
<dbReference type="InterPro" id="IPR014762">
    <property type="entry name" value="DNA_mismatch_repair_CS"/>
</dbReference>
<dbReference type="InterPro" id="IPR020667">
    <property type="entry name" value="DNA_mismatch_repair_MutL"/>
</dbReference>
<dbReference type="InterPro" id="IPR013507">
    <property type="entry name" value="DNA_mismatch_S5_2-like"/>
</dbReference>
<dbReference type="InterPro" id="IPR036890">
    <property type="entry name" value="HATPase_C_sf"/>
</dbReference>
<dbReference type="InterPro" id="IPR002099">
    <property type="entry name" value="MutL/Mlh/PMS"/>
</dbReference>
<dbReference type="InterPro" id="IPR038973">
    <property type="entry name" value="MutL/Mlh/Pms-like"/>
</dbReference>
<dbReference type="InterPro" id="IPR014790">
    <property type="entry name" value="MutL_C"/>
</dbReference>
<dbReference type="InterPro" id="IPR042120">
    <property type="entry name" value="MutL_C_dimsub"/>
</dbReference>
<dbReference type="InterPro" id="IPR042121">
    <property type="entry name" value="MutL_C_regsub"/>
</dbReference>
<dbReference type="InterPro" id="IPR037198">
    <property type="entry name" value="MutL_C_sf"/>
</dbReference>
<dbReference type="InterPro" id="IPR020568">
    <property type="entry name" value="Ribosomal_Su5_D2-typ_SF"/>
</dbReference>
<dbReference type="InterPro" id="IPR014721">
    <property type="entry name" value="Ribsml_uS5_D2-typ_fold_subgr"/>
</dbReference>
<dbReference type="NCBIfam" id="TIGR00585">
    <property type="entry name" value="mutl"/>
    <property type="match status" value="1"/>
</dbReference>
<dbReference type="NCBIfam" id="NF000953">
    <property type="entry name" value="PRK00095.2-4"/>
    <property type="match status" value="1"/>
</dbReference>
<dbReference type="PANTHER" id="PTHR10073">
    <property type="entry name" value="DNA MISMATCH REPAIR PROTEIN MLH, PMS, MUTL"/>
    <property type="match status" value="1"/>
</dbReference>
<dbReference type="PANTHER" id="PTHR10073:SF12">
    <property type="entry name" value="DNA MISMATCH REPAIR PROTEIN MLH1"/>
    <property type="match status" value="1"/>
</dbReference>
<dbReference type="Pfam" id="PF01119">
    <property type="entry name" value="DNA_mis_repair"/>
    <property type="match status" value="1"/>
</dbReference>
<dbReference type="Pfam" id="PF13589">
    <property type="entry name" value="HATPase_c_3"/>
    <property type="match status" value="1"/>
</dbReference>
<dbReference type="Pfam" id="PF08676">
    <property type="entry name" value="MutL_C"/>
    <property type="match status" value="1"/>
</dbReference>
<dbReference type="SMART" id="SM01340">
    <property type="entry name" value="DNA_mis_repair"/>
    <property type="match status" value="1"/>
</dbReference>
<dbReference type="SMART" id="SM00853">
    <property type="entry name" value="MutL_C"/>
    <property type="match status" value="1"/>
</dbReference>
<dbReference type="SUPFAM" id="SSF55874">
    <property type="entry name" value="ATPase domain of HSP90 chaperone/DNA topoisomerase II/histidine kinase"/>
    <property type="match status" value="1"/>
</dbReference>
<dbReference type="SUPFAM" id="SSF118116">
    <property type="entry name" value="DNA mismatch repair protein MutL"/>
    <property type="match status" value="1"/>
</dbReference>
<dbReference type="SUPFAM" id="SSF54211">
    <property type="entry name" value="Ribosomal protein S5 domain 2-like"/>
    <property type="match status" value="1"/>
</dbReference>
<dbReference type="PROSITE" id="PS00058">
    <property type="entry name" value="DNA_MISMATCH_REPAIR_1"/>
    <property type="match status" value="1"/>
</dbReference>
<comment type="function">
    <text evidence="1">This protein is involved in the repair of mismatches in DNA. It is required for dam-dependent methyl-directed DNA mismatch repair. May act as a 'molecular matchmaker', a protein that promotes the formation of a stable complex between two or more DNA-binding proteins in an ATP-dependent manner without itself being part of a final effector complex.</text>
</comment>
<comment type="similarity">
    <text evidence="1">Belongs to the DNA mismatch repair MutL/HexB family.</text>
</comment>